<sequence length="218" mass="24272">MIEVLNLTKKIKKTTVLDNISYTFEKGTIYGLFGSNGSGKTMLLRALSGLIVPTEGSITIKGEQLHKDISFPKSVGLIIENMQLLPQYDAFTNLKILSKIKKIASDNDILDSISRVGLENFNSVKVSKFSLGMKQRLNIAQAIFEKPDILLLDEPTNAIDEKGVAFVHDILLQEKKRGATIIITSHHKEDIISLCDIALEMNHGRLETSEKVIYKKDS</sequence>
<protein>
    <recommendedName>
        <fullName>Uncharacterized ABC transporter ATP-binding protein YybJ</fullName>
    </recommendedName>
</protein>
<evidence type="ECO:0000255" key="1">
    <source>
        <dbReference type="PROSITE-ProRule" id="PRU00434"/>
    </source>
</evidence>
<evidence type="ECO:0000305" key="2"/>
<proteinExistence type="inferred from homology"/>
<gene>
    <name type="primary">yybJ</name>
    <name type="ordered locus">BSU40620</name>
</gene>
<name>YYBJ_BACSU</name>
<reference key="1">
    <citation type="journal article" date="1991" name="J. Bacteriol.">
        <title>In vitro type II binding of chromosomal DNA to membrane in Bacillus subtilis.</title>
        <authorList>
            <person name="Sato Y."/>
            <person name="McCollum M."/>
            <person name="McKenzie T."/>
            <person name="Laffan J."/>
            <person name="Zuberi A."/>
            <person name="Sueoka N."/>
        </authorList>
    </citation>
    <scope>PRELIMINARY NUCLEOTIDE SEQUENCE [GENOMIC DNA]</scope>
    <source>
        <strain>168</strain>
    </source>
</reference>
<reference key="2">
    <citation type="journal article" date="1994" name="DNA Res.">
        <title>Systematic sequencing of the 180 kilobase region of the Bacillus subtilis chromosome containing the replication origin.</title>
        <authorList>
            <person name="Ogasawara N."/>
            <person name="Nakai S."/>
            <person name="Yoshikawa H."/>
        </authorList>
    </citation>
    <scope>NUCLEOTIDE SEQUENCE [GENOMIC DNA]</scope>
    <source>
        <strain>168</strain>
    </source>
</reference>
<reference key="3">
    <citation type="journal article" date="1997" name="Nature">
        <title>The complete genome sequence of the Gram-positive bacterium Bacillus subtilis.</title>
        <authorList>
            <person name="Kunst F."/>
            <person name="Ogasawara N."/>
            <person name="Moszer I."/>
            <person name="Albertini A.M."/>
            <person name="Alloni G."/>
            <person name="Azevedo V."/>
            <person name="Bertero M.G."/>
            <person name="Bessieres P."/>
            <person name="Bolotin A."/>
            <person name="Borchert S."/>
            <person name="Borriss R."/>
            <person name="Boursier L."/>
            <person name="Brans A."/>
            <person name="Braun M."/>
            <person name="Brignell S.C."/>
            <person name="Bron S."/>
            <person name="Brouillet S."/>
            <person name="Bruschi C.V."/>
            <person name="Caldwell B."/>
            <person name="Capuano V."/>
            <person name="Carter N.M."/>
            <person name="Choi S.-K."/>
            <person name="Codani J.-J."/>
            <person name="Connerton I.F."/>
            <person name="Cummings N.J."/>
            <person name="Daniel R.A."/>
            <person name="Denizot F."/>
            <person name="Devine K.M."/>
            <person name="Duesterhoeft A."/>
            <person name="Ehrlich S.D."/>
            <person name="Emmerson P.T."/>
            <person name="Entian K.-D."/>
            <person name="Errington J."/>
            <person name="Fabret C."/>
            <person name="Ferrari E."/>
            <person name="Foulger D."/>
            <person name="Fritz C."/>
            <person name="Fujita M."/>
            <person name="Fujita Y."/>
            <person name="Fuma S."/>
            <person name="Galizzi A."/>
            <person name="Galleron N."/>
            <person name="Ghim S.-Y."/>
            <person name="Glaser P."/>
            <person name="Goffeau A."/>
            <person name="Golightly E.J."/>
            <person name="Grandi G."/>
            <person name="Guiseppi G."/>
            <person name="Guy B.J."/>
            <person name="Haga K."/>
            <person name="Haiech J."/>
            <person name="Harwood C.R."/>
            <person name="Henaut A."/>
            <person name="Hilbert H."/>
            <person name="Holsappel S."/>
            <person name="Hosono S."/>
            <person name="Hullo M.-F."/>
            <person name="Itaya M."/>
            <person name="Jones L.-M."/>
            <person name="Joris B."/>
            <person name="Karamata D."/>
            <person name="Kasahara Y."/>
            <person name="Klaerr-Blanchard M."/>
            <person name="Klein C."/>
            <person name="Kobayashi Y."/>
            <person name="Koetter P."/>
            <person name="Koningstein G."/>
            <person name="Krogh S."/>
            <person name="Kumano M."/>
            <person name="Kurita K."/>
            <person name="Lapidus A."/>
            <person name="Lardinois S."/>
            <person name="Lauber J."/>
            <person name="Lazarevic V."/>
            <person name="Lee S.-M."/>
            <person name="Levine A."/>
            <person name="Liu H."/>
            <person name="Masuda S."/>
            <person name="Mauel C."/>
            <person name="Medigue C."/>
            <person name="Medina N."/>
            <person name="Mellado R.P."/>
            <person name="Mizuno M."/>
            <person name="Moestl D."/>
            <person name="Nakai S."/>
            <person name="Noback M."/>
            <person name="Noone D."/>
            <person name="O'Reilly M."/>
            <person name="Ogawa K."/>
            <person name="Ogiwara A."/>
            <person name="Oudega B."/>
            <person name="Park S.-H."/>
            <person name="Parro V."/>
            <person name="Pohl T.M."/>
            <person name="Portetelle D."/>
            <person name="Porwollik S."/>
            <person name="Prescott A.M."/>
            <person name="Presecan E."/>
            <person name="Pujic P."/>
            <person name="Purnelle B."/>
            <person name="Rapoport G."/>
            <person name="Rey M."/>
            <person name="Reynolds S."/>
            <person name="Rieger M."/>
            <person name="Rivolta C."/>
            <person name="Rocha E."/>
            <person name="Roche B."/>
            <person name="Rose M."/>
            <person name="Sadaie Y."/>
            <person name="Sato T."/>
            <person name="Scanlan E."/>
            <person name="Schleich S."/>
            <person name="Schroeter R."/>
            <person name="Scoffone F."/>
            <person name="Sekiguchi J."/>
            <person name="Sekowska A."/>
            <person name="Seror S.J."/>
            <person name="Serror P."/>
            <person name="Shin B.-S."/>
            <person name="Soldo B."/>
            <person name="Sorokin A."/>
            <person name="Tacconi E."/>
            <person name="Takagi T."/>
            <person name="Takahashi H."/>
            <person name="Takemaru K."/>
            <person name="Takeuchi M."/>
            <person name="Tamakoshi A."/>
            <person name="Tanaka T."/>
            <person name="Terpstra P."/>
            <person name="Tognoni A."/>
            <person name="Tosato V."/>
            <person name="Uchiyama S."/>
            <person name="Vandenbol M."/>
            <person name="Vannier F."/>
            <person name="Vassarotti A."/>
            <person name="Viari A."/>
            <person name="Wambutt R."/>
            <person name="Wedler E."/>
            <person name="Wedler H."/>
            <person name="Weitzenegger T."/>
            <person name="Winters P."/>
            <person name="Wipat A."/>
            <person name="Yamamoto H."/>
            <person name="Yamane K."/>
            <person name="Yasumoto K."/>
            <person name="Yata K."/>
            <person name="Yoshida K."/>
            <person name="Yoshikawa H.-F."/>
            <person name="Zumstein E."/>
            <person name="Yoshikawa H."/>
            <person name="Danchin A."/>
        </authorList>
    </citation>
    <scope>NUCLEOTIDE SEQUENCE [LARGE SCALE GENOMIC DNA]</scope>
    <source>
        <strain>168</strain>
    </source>
</reference>
<dbReference type="EMBL" id="M77837">
    <property type="protein sequence ID" value="AAA22592.1"/>
    <property type="molecule type" value="Genomic_DNA"/>
</dbReference>
<dbReference type="EMBL" id="D26185">
    <property type="protein sequence ID" value="BAA05193.1"/>
    <property type="molecule type" value="Genomic_DNA"/>
</dbReference>
<dbReference type="EMBL" id="AL009126">
    <property type="protein sequence ID" value="CAB16099.1"/>
    <property type="molecule type" value="Genomic_DNA"/>
</dbReference>
<dbReference type="PIR" id="S65987">
    <property type="entry name" value="S65987"/>
</dbReference>
<dbReference type="RefSeq" id="NP_391942.1">
    <property type="nucleotide sequence ID" value="NC_000964.3"/>
</dbReference>
<dbReference type="RefSeq" id="WP_003243153.1">
    <property type="nucleotide sequence ID" value="NZ_OZ025638.1"/>
</dbReference>
<dbReference type="SMR" id="P37494"/>
<dbReference type="FunCoup" id="P37494">
    <property type="interactions" value="21"/>
</dbReference>
<dbReference type="STRING" id="224308.BSU40620"/>
<dbReference type="TCDB" id="3.A.1.158.1">
    <property type="family name" value="the atp-binding cassette (abc) superfamily"/>
</dbReference>
<dbReference type="PaxDb" id="224308-BSU40620"/>
<dbReference type="EnsemblBacteria" id="CAB16099">
    <property type="protein sequence ID" value="CAB16099"/>
    <property type="gene ID" value="BSU_40620"/>
</dbReference>
<dbReference type="GeneID" id="937807"/>
<dbReference type="KEGG" id="bsu:BSU40620"/>
<dbReference type="PATRIC" id="fig|224308.179.peg.4404"/>
<dbReference type="eggNOG" id="COG1131">
    <property type="taxonomic scope" value="Bacteria"/>
</dbReference>
<dbReference type="InParanoid" id="P37494"/>
<dbReference type="OrthoDB" id="9804819at2"/>
<dbReference type="PhylomeDB" id="P37494"/>
<dbReference type="BioCyc" id="BSUB:BSU40620-MONOMER"/>
<dbReference type="Proteomes" id="UP000001570">
    <property type="component" value="Chromosome"/>
</dbReference>
<dbReference type="GO" id="GO:0005524">
    <property type="term" value="F:ATP binding"/>
    <property type="evidence" value="ECO:0007669"/>
    <property type="project" value="UniProtKB-KW"/>
</dbReference>
<dbReference type="GO" id="GO:0016887">
    <property type="term" value="F:ATP hydrolysis activity"/>
    <property type="evidence" value="ECO:0007669"/>
    <property type="project" value="InterPro"/>
</dbReference>
<dbReference type="CDD" id="cd03230">
    <property type="entry name" value="ABC_DR_subfamily_A"/>
    <property type="match status" value="1"/>
</dbReference>
<dbReference type="Gene3D" id="3.40.50.300">
    <property type="entry name" value="P-loop containing nucleotide triphosphate hydrolases"/>
    <property type="match status" value="1"/>
</dbReference>
<dbReference type="InterPro" id="IPR003593">
    <property type="entry name" value="AAA+_ATPase"/>
</dbReference>
<dbReference type="InterPro" id="IPR003439">
    <property type="entry name" value="ABC_transporter-like_ATP-bd"/>
</dbReference>
<dbReference type="InterPro" id="IPR017871">
    <property type="entry name" value="ABC_transporter-like_CS"/>
</dbReference>
<dbReference type="InterPro" id="IPR027417">
    <property type="entry name" value="P-loop_NTPase"/>
</dbReference>
<dbReference type="PANTHER" id="PTHR43335">
    <property type="entry name" value="ABC TRANSPORTER, ATP-BINDING PROTEIN"/>
    <property type="match status" value="1"/>
</dbReference>
<dbReference type="PANTHER" id="PTHR43335:SF4">
    <property type="entry name" value="ABC TRANSPORTER, ATP-BINDING PROTEIN"/>
    <property type="match status" value="1"/>
</dbReference>
<dbReference type="Pfam" id="PF00005">
    <property type="entry name" value="ABC_tran"/>
    <property type="match status" value="1"/>
</dbReference>
<dbReference type="SMART" id="SM00382">
    <property type="entry name" value="AAA"/>
    <property type="match status" value="1"/>
</dbReference>
<dbReference type="SUPFAM" id="SSF52540">
    <property type="entry name" value="P-loop containing nucleoside triphosphate hydrolases"/>
    <property type="match status" value="1"/>
</dbReference>
<dbReference type="PROSITE" id="PS00211">
    <property type="entry name" value="ABC_TRANSPORTER_1"/>
    <property type="match status" value="1"/>
</dbReference>
<dbReference type="PROSITE" id="PS50893">
    <property type="entry name" value="ABC_TRANSPORTER_2"/>
    <property type="match status" value="1"/>
</dbReference>
<organism>
    <name type="scientific">Bacillus subtilis (strain 168)</name>
    <dbReference type="NCBI Taxonomy" id="224308"/>
    <lineage>
        <taxon>Bacteria</taxon>
        <taxon>Bacillati</taxon>
        <taxon>Bacillota</taxon>
        <taxon>Bacilli</taxon>
        <taxon>Bacillales</taxon>
        <taxon>Bacillaceae</taxon>
        <taxon>Bacillus</taxon>
    </lineage>
</organism>
<accession>P37494</accession>
<keyword id="KW-0067">ATP-binding</keyword>
<keyword id="KW-0547">Nucleotide-binding</keyword>
<keyword id="KW-1185">Reference proteome</keyword>
<keyword id="KW-0813">Transport</keyword>
<feature type="chain" id="PRO_0000093148" description="Uncharacterized ABC transporter ATP-binding protein YybJ">
    <location>
        <begin position="1"/>
        <end position="218"/>
    </location>
</feature>
<feature type="domain" description="ABC transporter" evidence="1">
    <location>
        <begin position="2"/>
        <end position="216"/>
    </location>
</feature>
<feature type="binding site" evidence="1">
    <location>
        <begin position="34"/>
        <end position="41"/>
    </location>
    <ligand>
        <name>ATP</name>
        <dbReference type="ChEBI" id="CHEBI:30616"/>
    </ligand>
</feature>
<comment type="similarity">
    <text evidence="2">Belongs to the ABC transporter superfamily.</text>
</comment>